<proteinExistence type="inferred from homology"/>
<feature type="chain" id="PRO_1000095393" description="Arginine--tRNA ligase">
    <location>
        <begin position="1"/>
        <end position="576"/>
    </location>
</feature>
<feature type="short sequence motif" description="'HIGH' region">
    <location>
        <begin position="122"/>
        <end position="132"/>
    </location>
</feature>
<reference key="1">
    <citation type="journal article" date="2008" name="J. Bacteriol.">
        <title>Complete genome sequence of uropathogenic Proteus mirabilis, a master of both adherence and motility.</title>
        <authorList>
            <person name="Pearson M.M."/>
            <person name="Sebaihia M."/>
            <person name="Churcher C."/>
            <person name="Quail M.A."/>
            <person name="Seshasayee A.S."/>
            <person name="Luscombe N.M."/>
            <person name="Abdellah Z."/>
            <person name="Arrosmith C."/>
            <person name="Atkin B."/>
            <person name="Chillingworth T."/>
            <person name="Hauser H."/>
            <person name="Jagels K."/>
            <person name="Moule S."/>
            <person name="Mungall K."/>
            <person name="Norbertczak H."/>
            <person name="Rabbinowitsch E."/>
            <person name="Walker D."/>
            <person name="Whithead S."/>
            <person name="Thomson N.R."/>
            <person name="Rather P.N."/>
            <person name="Parkhill J."/>
            <person name="Mobley H.L.T."/>
        </authorList>
    </citation>
    <scope>NUCLEOTIDE SEQUENCE [LARGE SCALE GENOMIC DNA]</scope>
    <source>
        <strain>HI4320</strain>
    </source>
</reference>
<gene>
    <name evidence="1" type="primary">argS</name>
    <name type="ordered locus">PMI1103</name>
</gene>
<evidence type="ECO:0000255" key="1">
    <source>
        <dbReference type="HAMAP-Rule" id="MF_00123"/>
    </source>
</evidence>
<comment type="catalytic activity">
    <reaction evidence="1">
        <text>tRNA(Arg) + L-arginine + ATP = L-arginyl-tRNA(Arg) + AMP + diphosphate</text>
        <dbReference type="Rhea" id="RHEA:20301"/>
        <dbReference type="Rhea" id="RHEA-COMP:9658"/>
        <dbReference type="Rhea" id="RHEA-COMP:9673"/>
        <dbReference type="ChEBI" id="CHEBI:30616"/>
        <dbReference type="ChEBI" id="CHEBI:32682"/>
        <dbReference type="ChEBI" id="CHEBI:33019"/>
        <dbReference type="ChEBI" id="CHEBI:78442"/>
        <dbReference type="ChEBI" id="CHEBI:78513"/>
        <dbReference type="ChEBI" id="CHEBI:456215"/>
        <dbReference type="EC" id="6.1.1.19"/>
    </reaction>
</comment>
<comment type="subunit">
    <text evidence="1">Monomer.</text>
</comment>
<comment type="subcellular location">
    <subcellularLocation>
        <location evidence="1">Cytoplasm</location>
    </subcellularLocation>
</comment>
<comment type="similarity">
    <text evidence="1">Belongs to the class-I aminoacyl-tRNA synthetase family.</text>
</comment>
<dbReference type="EC" id="6.1.1.19" evidence="1"/>
<dbReference type="EMBL" id="AM942759">
    <property type="protein sequence ID" value="CAR42387.1"/>
    <property type="molecule type" value="Genomic_DNA"/>
</dbReference>
<dbReference type="RefSeq" id="WP_012367856.1">
    <property type="nucleotide sequence ID" value="NC_010554.1"/>
</dbReference>
<dbReference type="SMR" id="B4ETN5"/>
<dbReference type="EnsemblBacteria" id="CAR42387">
    <property type="protein sequence ID" value="CAR42387"/>
    <property type="gene ID" value="PMI1103"/>
</dbReference>
<dbReference type="GeneID" id="6801055"/>
<dbReference type="KEGG" id="pmr:PMI1103"/>
<dbReference type="PATRIC" id="fig|529507.6.peg.1067"/>
<dbReference type="eggNOG" id="COG0018">
    <property type="taxonomic scope" value="Bacteria"/>
</dbReference>
<dbReference type="HOGENOM" id="CLU_006406_5_1_6"/>
<dbReference type="Proteomes" id="UP000008319">
    <property type="component" value="Chromosome"/>
</dbReference>
<dbReference type="GO" id="GO:0005737">
    <property type="term" value="C:cytoplasm"/>
    <property type="evidence" value="ECO:0007669"/>
    <property type="project" value="UniProtKB-SubCell"/>
</dbReference>
<dbReference type="GO" id="GO:0004814">
    <property type="term" value="F:arginine-tRNA ligase activity"/>
    <property type="evidence" value="ECO:0007669"/>
    <property type="project" value="UniProtKB-UniRule"/>
</dbReference>
<dbReference type="GO" id="GO:0005524">
    <property type="term" value="F:ATP binding"/>
    <property type="evidence" value="ECO:0007669"/>
    <property type="project" value="UniProtKB-UniRule"/>
</dbReference>
<dbReference type="GO" id="GO:0006420">
    <property type="term" value="P:arginyl-tRNA aminoacylation"/>
    <property type="evidence" value="ECO:0007669"/>
    <property type="project" value="UniProtKB-UniRule"/>
</dbReference>
<dbReference type="CDD" id="cd07956">
    <property type="entry name" value="Anticodon_Ia_Arg"/>
    <property type="match status" value="1"/>
</dbReference>
<dbReference type="CDD" id="cd00671">
    <property type="entry name" value="ArgRS_core"/>
    <property type="match status" value="1"/>
</dbReference>
<dbReference type="FunFam" id="1.10.730.10:FF:000001">
    <property type="entry name" value="Arginine--tRNA ligase"/>
    <property type="match status" value="1"/>
</dbReference>
<dbReference type="FunFam" id="3.40.50.620:FF:000030">
    <property type="entry name" value="Arginine--tRNA ligase"/>
    <property type="match status" value="1"/>
</dbReference>
<dbReference type="Gene3D" id="3.30.1360.70">
    <property type="entry name" value="Arginyl tRNA synthetase N-terminal domain"/>
    <property type="match status" value="1"/>
</dbReference>
<dbReference type="Gene3D" id="3.40.50.620">
    <property type="entry name" value="HUPs"/>
    <property type="match status" value="1"/>
</dbReference>
<dbReference type="Gene3D" id="1.10.730.10">
    <property type="entry name" value="Isoleucyl-tRNA Synthetase, Domain 1"/>
    <property type="match status" value="1"/>
</dbReference>
<dbReference type="HAMAP" id="MF_00123">
    <property type="entry name" value="Arg_tRNA_synth"/>
    <property type="match status" value="1"/>
</dbReference>
<dbReference type="InterPro" id="IPR001412">
    <property type="entry name" value="aa-tRNA-synth_I_CS"/>
</dbReference>
<dbReference type="InterPro" id="IPR001278">
    <property type="entry name" value="Arg-tRNA-ligase"/>
</dbReference>
<dbReference type="InterPro" id="IPR005148">
    <property type="entry name" value="Arg-tRNA-synth_N"/>
</dbReference>
<dbReference type="InterPro" id="IPR036695">
    <property type="entry name" value="Arg-tRNA-synth_N_sf"/>
</dbReference>
<dbReference type="InterPro" id="IPR035684">
    <property type="entry name" value="ArgRS_core"/>
</dbReference>
<dbReference type="InterPro" id="IPR008909">
    <property type="entry name" value="DALR_anticod-bd"/>
</dbReference>
<dbReference type="InterPro" id="IPR014729">
    <property type="entry name" value="Rossmann-like_a/b/a_fold"/>
</dbReference>
<dbReference type="InterPro" id="IPR009080">
    <property type="entry name" value="tRNAsynth_Ia_anticodon-bd"/>
</dbReference>
<dbReference type="NCBIfam" id="TIGR00456">
    <property type="entry name" value="argS"/>
    <property type="match status" value="1"/>
</dbReference>
<dbReference type="PANTHER" id="PTHR11956:SF5">
    <property type="entry name" value="ARGININE--TRNA LIGASE, CYTOPLASMIC"/>
    <property type="match status" value="1"/>
</dbReference>
<dbReference type="PANTHER" id="PTHR11956">
    <property type="entry name" value="ARGINYL-TRNA SYNTHETASE"/>
    <property type="match status" value="1"/>
</dbReference>
<dbReference type="Pfam" id="PF03485">
    <property type="entry name" value="Arg_tRNA_synt_N"/>
    <property type="match status" value="1"/>
</dbReference>
<dbReference type="Pfam" id="PF05746">
    <property type="entry name" value="DALR_1"/>
    <property type="match status" value="1"/>
</dbReference>
<dbReference type="Pfam" id="PF00750">
    <property type="entry name" value="tRNA-synt_1d"/>
    <property type="match status" value="1"/>
</dbReference>
<dbReference type="PRINTS" id="PR01038">
    <property type="entry name" value="TRNASYNTHARG"/>
</dbReference>
<dbReference type="SMART" id="SM01016">
    <property type="entry name" value="Arg_tRNA_synt_N"/>
    <property type="match status" value="1"/>
</dbReference>
<dbReference type="SMART" id="SM00836">
    <property type="entry name" value="DALR_1"/>
    <property type="match status" value="1"/>
</dbReference>
<dbReference type="SUPFAM" id="SSF47323">
    <property type="entry name" value="Anticodon-binding domain of a subclass of class I aminoacyl-tRNA synthetases"/>
    <property type="match status" value="1"/>
</dbReference>
<dbReference type="SUPFAM" id="SSF55190">
    <property type="entry name" value="Arginyl-tRNA synthetase (ArgRS), N-terminal 'additional' domain"/>
    <property type="match status" value="1"/>
</dbReference>
<dbReference type="SUPFAM" id="SSF52374">
    <property type="entry name" value="Nucleotidylyl transferase"/>
    <property type="match status" value="1"/>
</dbReference>
<dbReference type="PROSITE" id="PS00178">
    <property type="entry name" value="AA_TRNA_LIGASE_I"/>
    <property type="match status" value="1"/>
</dbReference>
<accession>B4ETN5</accession>
<sequence>MNIQAFLSEKISMAMSAAGAPADSEPLVRQSAKVQFGDYQANGVMGAAKKMGIPPRQLAEKILEHLDITDIADKVEIAGPGFINIFLSPVWVAQQAEFALADEHLNITKVTPETIVIDYSSPNVAKQMHVGHLRSTIIGDASARTLSFLGHNVIRANHLGDWGTQFGMLIAYLEKKQNENAADMALADLEEFYREAKKCYDEDEVFAERARNYVVRLQGGDEYCRTMWRKLVDITMQQNQLTYQRLNVTLTEDDIMGESLYNPMLPGIVADLKAKGLAVESEGATVVFLDEYKNKEGEPMGVIIQKKDGGYLYTTTDIACAKYRHEQLHANRVLYYIDSRQHQHLMQAWTIVRKAGYIPDSMSLEHHMFGMMLGKDGRPFKTRSGGTVRLTDLLDEAHERALTLIREKNPDMDEEELNNIARVVGIGAVKYADLSKNRTTDYIFDWDLMLSFEGNTAPYMQYAYTRVASIFKRADIDESALTQPISLTQPHEKQLALRLVQFDETITQVAREGTPHVMCAYLYDLAQSFSGFYENCPILSAEDDNVRQSRLKLARLTARTLKQGLETLGIETVDRM</sequence>
<protein>
    <recommendedName>
        <fullName evidence="1">Arginine--tRNA ligase</fullName>
        <ecNumber evidence="1">6.1.1.19</ecNumber>
    </recommendedName>
    <alternativeName>
        <fullName evidence="1">Arginyl-tRNA synthetase</fullName>
        <shortName evidence="1">ArgRS</shortName>
    </alternativeName>
</protein>
<keyword id="KW-0030">Aminoacyl-tRNA synthetase</keyword>
<keyword id="KW-0067">ATP-binding</keyword>
<keyword id="KW-0963">Cytoplasm</keyword>
<keyword id="KW-0436">Ligase</keyword>
<keyword id="KW-0547">Nucleotide-binding</keyword>
<keyword id="KW-0648">Protein biosynthesis</keyword>
<keyword id="KW-1185">Reference proteome</keyword>
<organism>
    <name type="scientific">Proteus mirabilis (strain HI4320)</name>
    <dbReference type="NCBI Taxonomy" id="529507"/>
    <lineage>
        <taxon>Bacteria</taxon>
        <taxon>Pseudomonadati</taxon>
        <taxon>Pseudomonadota</taxon>
        <taxon>Gammaproteobacteria</taxon>
        <taxon>Enterobacterales</taxon>
        <taxon>Morganellaceae</taxon>
        <taxon>Proteus</taxon>
    </lineage>
</organism>
<name>SYR_PROMH</name>